<accession>P0A2S5</accession>
<accession>Q56070</accession>
<keyword id="KW-0010">Activator</keyword>
<keyword id="KW-0046">Antibiotic resistance</keyword>
<keyword id="KW-0238">DNA-binding</keyword>
<keyword id="KW-0677">Repeat</keyword>
<keyword id="KW-0804">Transcription</keyword>
<keyword id="KW-0805">Transcription regulation</keyword>
<evidence type="ECO:0000250" key="1"/>
<evidence type="ECO:0000255" key="2">
    <source>
        <dbReference type="PROSITE-ProRule" id="PRU00593"/>
    </source>
</evidence>
<comment type="function">
    <text evidence="1">May be a transcriptional activator of genes involved in the multiple antibiotic resistance (Mar) phenotype. It can also activate genes such as sodA, zwf and micF (By similarity).</text>
</comment>
<comment type="subunit">
    <text evidence="1">Monomer.</text>
</comment>
<feature type="chain" id="PRO_0000194534" description="Multiple antibiotic resistance protein MarA">
    <location>
        <begin position="1"/>
        <end position="127"/>
    </location>
</feature>
<feature type="domain" description="HTH araC/xylS-type" evidence="2">
    <location>
        <begin position="12"/>
        <end position="110"/>
    </location>
</feature>
<feature type="DNA-binding region" description="H-T-H motif" evidence="2">
    <location>
        <begin position="29"/>
        <end position="50"/>
    </location>
</feature>
<feature type="DNA-binding region" description="H-T-H motif" evidence="2">
    <location>
        <begin position="77"/>
        <end position="100"/>
    </location>
</feature>
<gene>
    <name type="primary">marA</name>
    <name type="ordered locus">STY1541</name>
    <name type="ordered locus">t1440</name>
</gene>
<sequence length="127" mass="15155">MSRRNTDAITIHSILDWIEDNLESPLSLEKVSERSGYSKWHLQRMFKKETGHSLGQYIRSRKMTEIAQKLKESNEPILYLAERYGFESQQTLTRTFKNYFDVPPHKYRITNMHGESRYMLPLNHGNY</sequence>
<dbReference type="EMBL" id="AL513382">
    <property type="protein sequence ID" value="CAD01794.1"/>
    <property type="molecule type" value="Genomic_DNA"/>
</dbReference>
<dbReference type="EMBL" id="AE014613">
    <property type="protein sequence ID" value="AAO69082.1"/>
    <property type="molecule type" value="Genomic_DNA"/>
</dbReference>
<dbReference type="PIR" id="AI0677">
    <property type="entry name" value="AI0677"/>
</dbReference>
<dbReference type="RefSeq" id="NP_455961.3">
    <property type="nucleotide sequence ID" value="NC_003198.1"/>
</dbReference>
<dbReference type="RefSeq" id="WP_000091194.1">
    <property type="nucleotide sequence ID" value="NZ_WSUR01000006.1"/>
</dbReference>
<dbReference type="SMR" id="P0A2S5"/>
<dbReference type="STRING" id="220341.gene:17585484"/>
<dbReference type="KEGG" id="stt:t1440"/>
<dbReference type="KEGG" id="sty:STY1541"/>
<dbReference type="PATRIC" id="fig|220341.7.peg.1550"/>
<dbReference type="eggNOG" id="COG2207">
    <property type="taxonomic scope" value="Bacteria"/>
</dbReference>
<dbReference type="HOGENOM" id="CLU_000445_81_14_6"/>
<dbReference type="OMA" id="KFHENIG"/>
<dbReference type="OrthoDB" id="282744at2"/>
<dbReference type="Proteomes" id="UP000000541">
    <property type="component" value="Chromosome"/>
</dbReference>
<dbReference type="Proteomes" id="UP000002670">
    <property type="component" value="Chromosome"/>
</dbReference>
<dbReference type="GO" id="GO:0003700">
    <property type="term" value="F:DNA-binding transcription factor activity"/>
    <property type="evidence" value="ECO:0007669"/>
    <property type="project" value="InterPro"/>
</dbReference>
<dbReference type="GO" id="GO:0043565">
    <property type="term" value="F:sequence-specific DNA binding"/>
    <property type="evidence" value="ECO:0007669"/>
    <property type="project" value="InterPro"/>
</dbReference>
<dbReference type="GO" id="GO:0046677">
    <property type="term" value="P:response to antibiotic"/>
    <property type="evidence" value="ECO:0007669"/>
    <property type="project" value="UniProtKB-KW"/>
</dbReference>
<dbReference type="FunFam" id="1.10.10.60:FF:000013">
    <property type="entry name" value="DNA-binding transcriptional activator MarA"/>
    <property type="match status" value="1"/>
</dbReference>
<dbReference type="Gene3D" id="1.10.10.60">
    <property type="entry name" value="Homeodomain-like"/>
    <property type="match status" value="2"/>
</dbReference>
<dbReference type="InterPro" id="IPR009057">
    <property type="entry name" value="Homeodomain-like_sf"/>
</dbReference>
<dbReference type="InterPro" id="IPR018060">
    <property type="entry name" value="HTH_AraC"/>
</dbReference>
<dbReference type="InterPro" id="IPR018062">
    <property type="entry name" value="HTH_AraC-typ_CS"/>
</dbReference>
<dbReference type="InterPro" id="IPR050959">
    <property type="entry name" value="MarA-like"/>
</dbReference>
<dbReference type="NCBIfam" id="NF012198">
    <property type="entry name" value="MarA_TF"/>
    <property type="match status" value="1"/>
</dbReference>
<dbReference type="NCBIfam" id="NF008564">
    <property type="entry name" value="PRK11511.1"/>
    <property type="match status" value="1"/>
</dbReference>
<dbReference type="PANTHER" id="PTHR47504:SF4">
    <property type="entry name" value="MULTIPLE ANTIBIOTIC RESISTANCE PROTEIN MARA"/>
    <property type="match status" value="1"/>
</dbReference>
<dbReference type="PANTHER" id="PTHR47504">
    <property type="entry name" value="RIGHT ORIGIN-BINDING PROTEIN"/>
    <property type="match status" value="1"/>
</dbReference>
<dbReference type="Pfam" id="PF12833">
    <property type="entry name" value="HTH_18"/>
    <property type="match status" value="1"/>
</dbReference>
<dbReference type="SMART" id="SM00342">
    <property type="entry name" value="HTH_ARAC"/>
    <property type="match status" value="1"/>
</dbReference>
<dbReference type="SUPFAM" id="SSF46689">
    <property type="entry name" value="Homeodomain-like"/>
    <property type="match status" value="2"/>
</dbReference>
<dbReference type="PROSITE" id="PS00041">
    <property type="entry name" value="HTH_ARAC_FAMILY_1"/>
    <property type="match status" value="1"/>
</dbReference>
<dbReference type="PROSITE" id="PS01124">
    <property type="entry name" value="HTH_ARAC_FAMILY_2"/>
    <property type="match status" value="1"/>
</dbReference>
<organism>
    <name type="scientific">Salmonella typhi</name>
    <dbReference type="NCBI Taxonomy" id="90370"/>
    <lineage>
        <taxon>Bacteria</taxon>
        <taxon>Pseudomonadati</taxon>
        <taxon>Pseudomonadota</taxon>
        <taxon>Gammaproteobacteria</taxon>
        <taxon>Enterobacterales</taxon>
        <taxon>Enterobacteriaceae</taxon>
        <taxon>Salmonella</taxon>
    </lineage>
</organism>
<proteinExistence type="inferred from homology"/>
<reference key="1">
    <citation type="journal article" date="2001" name="Nature">
        <title>Complete genome sequence of a multiple drug resistant Salmonella enterica serovar Typhi CT18.</title>
        <authorList>
            <person name="Parkhill J."/>
            <person name="Dougan G."/>
            <person name="James K.D."/>
            <person name="Thomson N.R."/>
            <person name="Pickard D."/>
            <person name="Wain J."/>
            <person name="Churcher C.M."/>
            <person name="Mungall K.L."/>
            <person name="Bentley S.D."/>
            <person name="Holden M.T.G."/>
            <person name="Sebaihia M."/>
            <person name="Baker S."/>
            <person name="Basham D."/>
            <person name="Brooks K."/>
            <person name="Chillingworth T."/>
            <person name="Connerton P."/>
            <person name="Cronin A."/>
            <person name="Davis P."/>
            <person name="Davies R.M."/>
            <person name="Dowd L."/>
            <person name="White N."/>
            <person name="Farrar J."/>
            <person name="Feltwell T."/>
            <person name="Hamlin N."/>
            <person name="Haque A."/>
            <person name="Hien T.T."/>
            <person name="Holroyd S."/>
            <person name="Jagels K."/>
            <person name="Krogh A."/>
            <person name="Larsen T.S."/>
            <person name="Leather S."/>
            <person name="Moule S."/>
            <person name="O'Gaora P."/>
            <person name="Parry C."/>
            <person name="Quail M.A."/>
            <person name="Rutherford K.M."/>
            <person name="Simmonds M."/>
            <person name="Skelton J."/>
            <person name="Stevens K."/>
            <person name="Whitehead S."/>
            <person name="Barrell B.G."/>
        </authorList>
    </citation>
    <scope>NUCLEOTIDE SEQUENCE [LARGE SCALE GENOMIC DNA]</scope>
    <source>
        <strain>CT18</strain>
    </source>
</reference>
<reference key="2">
    <citation type="journal article" date="2003" name="J. Bacteriol.">
        <title>Comparative genomics of Salmonella enterica serovar Typhi strains Ty2 and CT18.</title>
        <authorList>
            <person name="Deng W."/>
            <person name="Liou S.-R."/>
            <person name="Plunkett G. III"/>
            <person name="Mayhew G.F."/>
            <person name="Rose D.J."/>
            <person name="Burland V."/>
            <person name="Kodoyianni V."/>
            <person name="Schwartz D.C."/>
            <person name="Blattner F.R."/>
        </authorList>
    </citation>
    <scope>NUCLEOTIDE SEQUENCE [LARGE SCALE GENOMIC DNA]</scope>
    <source>
        <strain>ATCC 700931 / Ty2</strain>
    </source>
</reference>
<name>MARA_SALTI</name>
<protein>
    <recommendedName>
        <fullName>Multiple antibiotic resistance protein MarA</fullName>
    </recommendedName>
</protein>